<feature type="initiator methionine" description="Removed" evidence="2 5">
    <location>
        <position position="1"/>
    </location>
</feature>
<feature type="chain" id="PRO_0000111503" description="Small ribosomal subunit protein uS9A">
    <location>
        <begin position="2"/>
        <end position="143"/>
    </location>
</feature>
<feature type="region of interest" description="Disordered" evidence="1">
    <location>
        <begin position="123"/>
        <end position="143"/>
    </location>
</feature>
<feature type="compositionally biased region" description="Basic residues" evidence="1">
    <location>
        <begin position="134"/>
        <end position="143"/>
    </location>
</feature>
<feature type="modified residue" description="N-acetylserine" evidence="2 5">
    <location>
        <position position="2"/>
    </location>
</feature>
<feature type="modified residue" description="Phosphoserine" evidence="13 14">
    <location>
        <position position="34"/>
    </location>
</feature>
<feature type="modified residue" description="Phosphoserine" evidence="12">
    <location>
        <position position="61"/>
    </location>
</feature>
<feature type="modified residue" description="Phosphothreonine" evidence="12">
    <location>
        <position position="70"/>
    </location>
</feature>
<feature type="modified residue" description="Phosphoserine" evidence="12">
    <location>
        <position position="76"/>
    </location>
</feature>
<feature type="cross-link" description="Glycyl lysine isopeptide (Lys-Gly) (interchain with G-Cter in ubiquitin)" evidence="15">
    <location>
        <position position="30"/>
    </location>
</feature>
<feature type="cross-link" description="Glycyl lysine isopeptide (Lys-Gly) (interchain with G-Cter in ubiquitin)" evidence="15">
    <location>
        <position position="47"/>
    </location>
</feature>
<feature type="cross-link" description="Glycyl lysine isopeptide (Lys-Gly) (interchain with G-Cter in ubiquitin)" evidence="15">
    <location>
        <position position="59"/>
    </location>
</feature>
<feature type="strand" evidence="17">
    <location>
        <begin position="6"/>
        <end position="15"/>
    </location>
</feature>
<feature type="strand" evidence="17">
    <location>
        <begin position="17"/>
        <end position="26"/>
    </location>
</feature>
<feature type="strand" evidence="17">
    <location>
        <begin position="28"/>
        <end position="31"/>
    </location>
</feature>
<feature type="helix" evidence="17">
    <location>
        <begin position="36"/>
        <end position="38"/>
    </location>
</feature>
<feature type="helix" evidence="17">
    <location>
        <begin position="42"/>
        <end position="45"/>
    </location>
</feature>
<feature type="helix" evidence="17">
    <location>
        <begin position="46"/>
        <end position="53"/>
    </location>
</feature>
<feature type="helix" evidence="17">
    <location>
        <begin position="57"/>
        <end position="60"/>
    </location>
</feature>
<feature type="strand" evidence="17">
    <location>
        <begin position="63"/>
        <end position="68"/>
    </location>
</feature>
<feature type="helix" evidence="17">
    <location>
        <begin position="76"/>
        <end position="96"/>
    </location>
</feature>
<feature type="helix" evidence="17">
    <location>
        <begin position="99"/>
        <end position="112"/>
    </location>
</feature>
<feature type="helix" evidence="17">
    <location>
        <begin position="114"/>
        <end position="116"/>
    </location>
</feature>
<feature type="strand" evidence="16">
    <location>
        <begin position="131"/>
        <end position="135"/>
    </location>
</feature>
<name>RS16A_YEAST</name>
<keyword id="KW-0002">3D-structure</keyword>
<keyword id="KW-0007">Acetylation</keyword>
<keyword id="KW-0963">Cytoplasm</keyword>
<keyword id="KW-0903">Direct protein sequencing</keyword>
<keyword id="KW-1017">Isopeptide bond</keyword>
<keyword id="KW-0597">Phosphoprotein</keyword>
<keyword id="KW-1185">Reference proteome</keyword>
<keyword id="KW-0687">Ribonucleoprotein</keyword>
<keyword id="KW-0689">Ribosomal protein</keyword>
<keyword id="KW-0832">Ubl conjugation</keyword>
<accession>P0CX51</accession>
<accession>D6VRR6</accession>
<accession>P26787</accession>
<accession>P40213</accession>
<sequence>MSAVPSVQTFGKKKSATAVAHVKAGKGLIKVNGSPITLVEPEILRFKVYEPLLLVGLDKFSNIDIRVRVTGGGHVSQVYAIRQAIAKGLVAYHQKYVDEQSKNELKKAFTSYDRTLLIADSRRPEPKKFGGKGARSRFQKSYR</sequence>
<dbReference type="EMBL" id="Z47071">
    <property type="protein sequence ID" value="CAA87357.1"/>
    <property type="molecule type" value="Genomic_DNA"/>
</dbReference>
<dbReference type="EMBL" id="BK006946">
    <property type="protein sequence ID" value="DAA10039.1"/>
    <property type="molecule type" value="Genomic_DNA"/>
</dbReference>
<dbReference type="PIR" id="S67619">
    <property type="entry name" value="S67619"/>
</dbReference>
<dbReference type="RefSeq" id="NP_013863.2">
    <property type="nucleotide sequence ID" value="NM_001182645.1"/>
</dbReference>
<dbReference type="PDB" id="3J6X">
    <property type="method" value="EM"/>
    <property type="resolution" value="6.10 A"/>
    <property type="chains" value="16=1-143"/>
</dbReference>
<dbReference type="PDB" id="3J6Y">
    <property type="method" value="EM"/>
    <property type="resolution" value="6.10 A"/>
    <property type="chains" value="16=1-143"/>
</dbReference>
<dbReference type="PDB" id="3J77">
    <property type="method" value="EM"/>
    <property type="resolution" value="6.20 A"/>
    <property type="chains" value="16=1-143"/>
</dbReference>
<dbReference type="PDB" id="3J78">
    <property type="method" value="EM"/>
    <property type="resolution" value="6.30 A"/>
    <property type="chains" value="16=1-143"/>
</dbReference>
<dbReference type="PDB" id="4U3M">
    <property type="method" value="X-ray"/>
    <property type="resolution" value="3.00 A"/>
    <property type="chains" value="C6/c6=2-143"/>
</dbReference>
<dbReference type="PDB" id="4U3N">
    <property type="method" value="X-ray"/>
    <property type="resolution" value="3.20 A"/>
    <property type="chains" value="C6/c6=2-143"/>
</dbReference>
<dbReference type="PDB" id="4U3U">
    <property type="method" value="X-ray"/>
    <property type="resolution" value="2.90 A"/>
    <property type="chains" value="C6/c6=2-143"/>
</dbReference>
<dbReference type="PDB" id="4U4N">
    <property type="method" value="X-ray"/>
    <property type="resolution" value="3.10 A"/>
    <property type="chains" value="C6/c6=2-143"/>
</dbReference>
<dbReference type="PDB" id="4U4O">
    <property type="method" value="X-ray"/>
    <property type="resolution" value="3.60 A"/>
    <property type="chains" value="C6/c6=2-143"/>
</dbReference>
<dbReference type="PDB" id="4U4Q">
    <property type="method" value="X-ray"/>
    <property type="resolution" value="3.00 A"/>
    <property type="chains" value="C6/c6=2-143"/>
</dbReference>
<dbReference type="PDB" id="4U4R">
    <property type="method" value="X-ray"/>
    <property type="resolution" value="2.80 A"/>
    <property type="chains" value="C6/c6=2-143"/>
</dbReference>
<dbReference type="PDB" id="4U4U">
    <property type="method" value="X-ray"/>
    <property type="resolution" value="3.00 A"/>
    <property type="chains" value="C6/c6=2-143"/>
</dbReference>
<dbReference type="PDB" id="4U4Y">
    <property type="method" value="X-ray"/>
    <property type="resolution" value="3.20 A"/>
    <property type="chains" value="C6/c6=2-143"/>
</dbReference>
<dbReference type="PDB" id="4U4Z">
    <property type="method" value="X-ray"/>
    <property type="resolution" value="3.10 A"/>
    <property type="chains" value="C6/c6=2-143"/>
</dbReference>
<dbReference type="PDB" id="4U50">
    <property type="method" value="X-ray"/>
    <property type="resolution" value="3.20 A"/>
    <property type="chains" value="C6/c6=2-143"/>
</dbReference>
<dbReference type="PDB" id="4U51">
    <property type="method" value="X-ray"/>
    <property type="resolution" value="3.20 A"/>
    <property type="chains" value="C6/c6=2-143"/>
</dbReference>
<dbReference type="PDB" id="4U52">
    <property type="method" value="X-ray"/>
    <property type="resolution" value="3.00 A"/>
    <property type="chains" value="C6/c6=2-143"/>
</dbReference>
<dbReference type="PDB" id="4U53">
    <property type="method" value="X-ray"/>
    <property type="resolution" value="3.30 A"/>
    <property type="chains" value="C6/c6=2-143"/>
</dbReference>
<dbReference type="PDB" id="4U55">
    <property type="method" value="X-ray"/>
    <property type="resolution" value="3.20 A"/>
    <property type="chains" value="C6/c6=2-143"/>
</dbReference>
<dbReference type="PDB" id="4U56">
    <property type="method" value="X-ray"/>
    <property type="resolution" value="3.45 A"/>
    <property type="chains" value="C6/c6=2-143"/>
</dbReference>
<dbReference type="PDB" id="4U6F">
    <property type="method" value="X-ray"/>
    <property type="resolution" value="3.10 A"/>
    <property type="chains" value="C6/c6=2-143"/>
</dbReference>
<dbReference type="PDB" id="4V4B">
    <property type="method" value="EM"/>
    <property type="resolution" value="11.70 A"/>
    <property type="chains" value="AI=2-143"/>
</dbReference>
<dbReference type="PDB" id="4V5Z">
    <property type="method" value="EM"/>
    <property type="resolution" value="8.70 A"/>
    <property type="chains" value="Ai=4-143"/>
</dbReference>
<dbReference type="PDB" id="4V6I">
    <property type="method" value="EM"/>
    <property type="resolution" value="8.80 A"/>
    <property type="chains" value="AI=1-143"/>
</dbReference>
<dbReference type="PDB" id="4V7R">
    <property type="method" value="X-ray"/>
    <property type="resolution" value="4.00 A"/>
    <property type="chains" value="AJ/CJ=1-143"/>
</dbReference>
<dbReference type="PDB" id="4V88">
    <property type="method" value="X-ray"/>
    <property type="resolution" value="3.00 A"/>
    <property type="chains" value="AQ/CQ=1-143"/>
</dbReference>
<dbReference type="PDB" id="4V8Y">
    <property type="method" value="EM"/>
    <property type="resolution" value="4.30 A"/>
    <property type="chains" value="AQ=1-143"/>
</dbReference>
<dbReference type="PDB" id="4V8Z">
    <property type="method" value="EM"/>
    <property type="resolution" value="6.60 A"/>
    <property type="chains" value="AQ=1-143"/>
</dbReference>
<dbReference type="PDB" id="4V92">
    <property type="method" value="EM"/>
    <property type="resolution" value="3.70 A"/>
    <property type="chains" value="Q=3-142"/>
</dbReference>
<dbReference type="PDB" id="5DAT">
    <property type="method" value="X-ray"/>
    <property type="resolution" value="3.15 A"/>
    <property type="chains" value="C6/c6=2-143"/>
</dbReference>
<dbReference type="PDB" id="5DC3">
    <property type="method" value="X-ray"/>
    <property type="resolution" value="3.25 A"/>
    <property type="chains" value="C6/c6=2-143"/>
</dbReference>
<dbReference type="PDB" id="5DGE">
    <property type="method" value="X-ray"/>
    <property type="resolution" value="3.45 A"/>
    <property type="chains" value="C6/c6=2-143"/>
</dbReference>
<dbReference type="PDB" id="5DGF">
    <property type="method" value="X-ray"/>
    <property type="resolution" value="3.30 A"/>
    <property type="chains" value="C6/c6=2-143"/>
</dbReference>
<dbReference type="PDB" id="5DGV">
    <property type="method" value="X-ray"/>
    <property type="resolution" value="3.10 A"/>
    <property type="chains" value="C6/c6=2-143"/>
</dbReference>
<dbReference type="PDB" id="5FCI">
    <property type="method" value="X-ray"/>
    <property type="resolution" value="3.40 A"/>
    <property type="chains" value="C6/c6=2-143"/>
</dbReference>
<dbReference type="PDB" id="5FCJ">
    <property type="method" value="X-ray"/>
    <property type="resolution" value="3.10 A"/>
    <property type="chains" value="C6/c6=2-143"/>
</dbReference>
<dbReference type="PDB" id="5I4L">
    <property type="method" value="X-ray"/>
    <property type="resolution" value="3.10 A"/>
    <property type="chains" value="C6/c6=2-143"/>
</dbReference>
<dbReference type="PDB" id="5JPQ">
    <property type="method" value="EM"/>
    <property type="resolution" value="7.30 A"/>
    <property type="chains" value="x=1-143"/>
</dbReference>
<dbReference type="PDB" id="5JUO">
    <property type="method" value="EM"/>
    <property type="resolution" value="4.00 A"/>
    <property type="chains" value="NB=1-143"/>
</dbReference>
<dbReference type="PDB" id="5JUP">
    <property type="method" value="EM"/>
    <property type="resolution" value="3.50 A"/>
    <property type="chains" value="NB=1-143"/>
</dbReference>
<dbReference type="PDB" id="5JUS">
    <property type="method" value="EM"/>
    <property type="resolution" value="4.20 A"/>
    <property type="chains" value="NB=1-143"/>
</dbReference>
<dbReference type="PDB" id="5JUT">
    <property type="method" value="EM"/>
    <property type="resolution" value="4.00 A"/>
    <property type="chains" value="NB=1-143"/>
</dbReference>
<dbReference type="PDB" id="5JUU">
    <property type="method" value="EM"/>
    <property type="resolution" value="4.00 A"/>
    <property type="chains" value="NB=1-143"/>
</dbReference>
<dbReference type="PDB" id="5LYB">
    <property type="method" value="X-ray"/>
    <property type="resolution" value="3.25 A"/>
    <property type="chains" value="C6/c6=2-143"/>
</dbReference>
<dbReference type="PDB" id="5M1J">
    <property type="method" value="EM"/>
    <property type="resolution" value="3.30 A"/>
    <property type="chains" value="Q2=3-143"/>
</dbReference>
<dbReference type="PDB" id="5MC6">
    <property type="method" value="EM"/>
    <property type="resolution" value="3.80 A"/>
    <property type="chains" value="F=1-143"/>
</dbReference>
<dbReference type="PDB" id="5MEI">
    <property type="method" value="X-ray"/>
    <property type="resolution" value="3.50 A"/>
    <property type="chains" value="R/c6=2-143"/>
</dbReference>
<dbReference type="PDB" id="5NDG">
    <property type="method" value="X-ray"/>
    <property type="resolution" value="3.70 A"/>
    <property type="chains" value="C6/c6=3-143"/>
</dbReference>
<dbReference type="PDB" id="5NDV">
    <property type="method" value="X-ray"/>
    <property type="resolution" value="3.30 A"/>
    <property type="chains" value="C6/c6=2-143"/>
</dbReference>
<dbReference type="PDB" id="5NDW">
    <property type="method" value="X-ray"/>
    <property type="resolution" value="3.70 A"/>
    <property type="chains" value="C6/c6=3-143"/>
</dbReference>
<dbReference type="PDB" id="5OBM">
    <property type="method" value="X-ray"/>
    <property type="resolution" value="3.40 A"/>
    <property type="chains" value="C6/c6=2-143"/>
</dbReference>
<dbReference type="PDB" id="5ON6">
    <property type="method" value="X-ray"/>
    <property type="resolution" value="3.10 A"/>
    <property type="chains" value="R/c6=2-143"/>
</dbReference>
<dbReference type="PDB" id="5TBW">
    <property type="method" value="X-ray"/>
    <property type="resolution" value="3.00 A"/>
    <property type="chains" value="R/c6=2-143"/>
</dbReference>
<dbReference type="PDB" id="5TGA">
    <property type="method" value="X-ray"/>
    <property type="resolution" value="3.30 A"/>
    <property type="chains" value="C6/c6=2-143"/>
</dbReference>
<dbReference type="PDB" id="5TGM">
    <property type="method" value="X-ray"/>
    <property type="resolution" value="3.50 A"/>
    <property type="chains" value="C6/c6=2-143"/>
</dbReference>
<dbReference type="PDB" id="5TZS">
    <property type="method" value="EM"/>
    <property type="resolution" value="5.10 A"/>
    <property type="chains" value="C=1-143"/>
</dbReference>
<dbReference type="PDB" id="5WLC">
    <property type="method" value="EM"/>
    <property type="resolution" value="3.80 A"/>
    <property type="chains" value="LC=1-143"/>
</dbReference>
<dbReference type="PDB" id="5WYJ">
    <property type="method" value="EM"/>
    <property type="resolution" value="8.70 A"/>
    <property type="chains" value="SR=1-143"/>
</dbReference>
<dbReference type="PDB" id="5WYK">
    <property type="method" value="EM"/>
    <property type="resolution" value="4.50 A"/>
    <property type="chains" value="SR=1-143"/>
</dbReference>
<dbReference type="PDB" id="6EML">
    <property type="method" value="EM"/>
    <property type="resolution" value="3.60 A"/>
    <property type="chains" value="F=1-143"/>
</dbReference>
<dbReference type="PDB" id="6FAI">
    <property type="method" value="EM"/>
    <property type="resolution" value="3.40 A"/>
    <property type="chains" value="Q=1-143"/>
</dbReference>
<dbReference type="PDB" id="6GQ1">
    <property type="method" value="EM"/>
    <property type="resolution" value="4.40 A"/>
    <property type="chains" value="AG=3-143"/>
</dbReference>
<dbReference type="PDB" id="6GQB">
    <property type="method" value="EM"/>
    <property type="resolution" value="3.90 A"/>
    <property type="chains" value="AG=3-143"/>
</dbReference>
<dbReference type="PDB" id="6GQV">
    <property type="method" value="EM"/>
    <property type="resolution" value="4.00 A"/>
    <property type="chains" value="AG=3-143"/>
</dbReference>
<dbReference type="PDB" id="6HHQ">
    <property type="method" value="X-ray"/>
    <property type="resolution" value="3.10 A"/>
    <property type="chains" value="R/c6=1-143"/>
</dbReference>
<dbReference type="PDB" id="6I7O">
    <property type="method" value="EM"/>
    <property type="resolution" value="5.30 A"/>
    <property type="chains" value="F/Fb=3-143"/>
</dbReference>
<dbReference type="PDB" id="6KE6">
    <property type="method" value="EM"/>
    <property type="resolution" value="3.40 A"/>
    <property type="chains" value="SR=1-143"/>
</dbReference>
<dbReference type="PDB" id="6LQP">
    <property type="method" value="EM"/>
    <property type="resolution" value="3.20 A"/>
    <property type="chains" value="SR=1-143"/>
</dbReference>
<dbReference type="PDB" id="6LQQ">
    <property type="method" value="EM"/>
    <property type="resolution" value="4.10 A"/>
    <property type="chains" value="SR=1-143"/>
</dbReference>
<dbReference type="PDB" id="6LQR">
    <property type="method" value="EM"/>
    <property type="resolution" value="8.60 A"/>
    <property type="chains" value="SR=1-143"/>
</dbReference>
<dbReference type="PDB" id="6LQS">
    <property type="method" value="EM"/>
    <property type="resolution" value="3.80 A"/>
    <property type="chains" value="SR=1-143"/>
</dbReference>
<dbReference type="PDB" id="6LQT">
    <property type="method" value="EM"/>
    <property type="resolution" value="4.90 A"/>
    <property type="chains" value="SR=1-143"/>
</dbReference>
<dbReference type="PDB" id="6LQU">
    <property type="method" value="EM"/>
    <property type="resolution" value="3.70 A"/>
    <property type="chains" value="SR=1-143"/>
</dbReference>
<dbReference type="PDB" id="6LQV">
    <property type="method" value="EM"/>
    <property type="resolution" value="4.80 A"/>
    <property type="chains" value="SR=1-143"/>
</dbReference>
<dbReference type="PDB" id="6Q8Y">
    <property type="method" value="EM"/>
    <property type="resolution" value="3.10 A"/>
    <property type="chains" value="F=3-143"/>
</dbReference>
<dbReference type="PDB" id="6RBD">
    <property type="method" value="EM"/>
    <property type="resolution" value="3.47 A"/>
    <property type="chains" value="Q=1-143"/>
</dbReference>
<dbReference type="PDB" id="6RBE">
    <property type="method" value="EM"/>
    <property type="resolution" value="3.80 A"/>
    <property type="chains" value="Q=1-143"/>
</dbReference>
<dbReference type="PDB" id="6S47">
    <property type="method" value="EM"/>
    <property type="resolution" value="3.28 A"/>
    <property type="chains" value="BR=2-143"/>
</dbReference>
<dbReference type="PDB" id="6SNT">
    <property type="method" value="EM"/>
    <property type="resolution" value="2.80 A"/>
    <property type="chains" value="Q=1-143"/>
</dbReference>
<dbReference type="PDB" id="6SV4">
    <property type="method" value="EM"/>
    <property type="resolution" value="3.30 A"/>
    <property type="chains" value="F/Fb/Fc=1-143"/>
</dbReference>
<dbReference type="PDB" id="6T4Q">
    <property type="method" value="EM"/>
    <property type="resolution" value="2.60 A"/>
    <property type="chains" value="SQ=3-143"/>
</dbReference>
<dbReference type="PDB" id="6T7I">
    <property type="method" value="EM"/>
    <property type="resolution" value="3.20 A"/>
    <property type="chains" value="SQ=1-143"/>
</dbReference>
<dbReference type="PDB" id="6T7T">
    <property type="method" value="EM"/>
    <property type="resolution" value="3.10 A"/>
    <property type="chains" value="SQ=1-143"/>
</dbReference>
<dbReference type="PDB" id="6T83">
    <property type="method" value="EM"/>
    <property type="resolution" value="4.00 A"/>
    <property type="chains" value="Qb/r=1-143"/>
</dbReference>
<dbReference type="PDB" id="6TB3">
    <property type="method" value="EM"/>
    <property type="resolution" value="2.80 A"/>
    <property type="chains" value="F=3-143"/>
</dbReference>
<dbReference type="PDB" id="6TNU">
    <property type="method" value="EM"/>
    <property type="resolution" value="3.10 A"/>
    <property type="chains" value="F=3-143"/>
</dbReference>
<dbReference type="PDB" id="6WDR">
    <property type="method" value="EM"/>
    <property type="resolution" value="3.70 A"/>
    <property type="chains" value="Q=3-129"/>
</dbReference>
<dbReference type="PDB" id="6WOO">
    <property type="method" value="EM"/>
    <property type="resolution" value="2.90 A"/>
    <property type="chains" value="QQ=3-143"/>
</dbReference>
<dbReference type="PDB" id="6XIQ">
    <property type="method" value="EM"/>
    <property type="resolution" value="4.20 A"/>
    <property type="chains" value="AG=1-143"/>
</dbReference>
<dbReference type="PDB" id="6XIR">
    <property type="method" value="EM"/>
    <property type="resolution" value="3.20 A"/>
    <property type="chains" value="AG=1-143"/>
</dbReference>
<dbReference type="PDB" id="6Y7C">
    <property type="method" value="EM"/>
    <property type="resolution" value="3.80 A"/>
    <property type="chains" value="Q=1-143"/>
</dbReference>
<dbReference type="PDB" id="6Z6J">
    <property type="method" value="EM"/>
    <property type="resolution" value="3.40 A"/>
    <property type="chains" value="SQ=1-143"/>
</dbReference>
<dbReference type="PDB" id="6Z6K">
    <property type="method" value="EM"/>
    <property type="resolution" value="3.40 A"/>
    <property type="chains" value="SQ=1-143"/>
</dbReference>
<dbReference type="PDB" id="6ZCE">
    <property type="method" value="EM"/>
    <property type="resolution" value="5.30 A"/>
    <property type="chains" value="R=1-143"/>
</dbReference>
<dbReference type="PDB" id="6ZQA">
    <property type="method" value="EM"/>
    <property type="resolution" value="4.40 A"/>
    <property type="chains" value="DQ=1-143"/>
</dbReference>
<dbReference type="PDB" id="6ZQB">
    <property type="method" value="EM"/>
    <property type="resolution" value="3.90 A"/>
    <property type="chains" value="DQ=1-143"/>
</dbReference>
<dbReference type="PDB" id="6ZQC">
    <property type="method" value="EM"/>
    <property type="resolution" value="3.80 A"/>
    <property type="chains" value="DQ=1-143"/>
</dbReference>
<dbReference type="PDB" id="6ZQD">
    <property type="method" value="EM"/>
    <property type="resolution" value="3.80 A"/>
    <property type="chains" value="DQ=1-143"/>
</dbReference>
<dbReference type="PDB" id="6ZQE">
    <property type="method" value="EM"/>
    <property type="resolution" value="7.10 A"/>
    <property type="chains" value="DQ=1-143"/>
</dbReference>
<dbReference type="PDB" id="6ZQF">
    <property type="method" value="EM"/>
    <property type="resolution" value="4.90 A"/>
    <property type="chains" value="DQ=1-143"/>
</dbReference>
<dbReference type="PDB" id="6ZQG">
    <property type="method" value="EM"/>
    <property type="resolution" value="3.50 A"/>
    <property type="chains" value="DQ=1-143"/>
</dbReference>
<dbReference type="PDB" id="6ZU9">
    <property type="method" value="EM"/>
    <property type="resolution" value="6.20 A"/>
    <property type="chains" value="H=1-143"/>
</dbReference>
<dbReference type="PDB" id="6ZVI">
    <property type="method" value="EM"/>
    <property type="resolution" value="3.00 A"/>
    <property type="chains" value="y=3-143"/>
</dbReference>
<dbReference type="PDB" id="7A1G">
    <property type="method" value="EM"/>
    <property type="resolution" value="3.00 A"/>
    <property type="chains" value="F=3-143"/>
</dbReference>
<dbReference type="PDB" id="7AJT">
    <property type="method" value="EM"/>
    <property type="resolution" value="4.60 A"/>
    <property type="chains" value="DQ=1-143"/>
</dbReference>
<dbReference type="PDB" id="7AJU">
    <property type="method" value="EM"/>
    <property type="resolution" value="3.80 A"/>
    <property type="chains" value="DQ=1-143"/>
</dbReference>
<dbReference type="PDB" id="7B7D">
    <property type="method" value="EM"/>
    <property type="resolution" value="3.30 A"/>
    <property type="chains" value="F=3-143"/>
</dbReference>
<dbReference type="PDB" id="7D4I">
    <property type="method" value="EM"/>
    <property type="resolution" value="4.00 A"/>
    <property type="chains" value="SR=1-143"/>
</dbReference>
<dbReference type="PDB" id="7D5S">
    <property type="method" value="EM"/>
    <property type="resolution" value="4.60 A"/>
    <property type="chains" value="SR=1-143"/>
</dbReference>
<dbReference type="PDB" id="7D5T">
    <property type="method" value="EM"/>
    <property type="resolution" value="6.00 A"/>
    <property type="chains" value="SR=1-143"/>
</dbReference>
<dbReference type="PDB" id="7D63">
    <property type="method" value="EM"/>
    <property type="resolution" value="12.30 A"/>
    <property type="chains" value="SR=1-143"/>
</dbReference>
<dbReference type="PDB" id="7MPI">
    <property type="method" value="EM"/>
    <property type="resolution" value="3.05 A"/>
    <property type="chains" value="BQ=3-143"/>
</dbReference>
<dbReference type="PDB" id="7MPJ">
    <property type="method" value="EM"/>
    <property type="resolution" value="2.70 A"/>
    <property type="chains" value="BQ=3-143"/>
</dbReference>
<dbReference type="PDB" id="7N8B">
    <property type="method" value="EM"/>
    <property type="resolution" value="3.05 A"/>
    <property type="chains" value="BQ=3-143"/>
</dbReference>
<dbReference type="PDB" id="7NRC">
    <property type="method" value="EM"/>
    <property type="resolution" value="3.90 A"/>
    <property type="chains" value="SF=3-143"/>
</dbReference>
<dbReference type="PDB" id="7NRD">
    <property type="method" value="EM"/>
    <property type="resolution" value="4.36 A"/>
    <property type="chains" value="SF=3-143"/>
</dbReference>
<dbReference type="PDB" id="7SUK">
    <property type="method" value="EM"/>
    <property type="resolution" value="3.99 A"/>
    <property type="chains" value="LC=3-127"/>
</dbReference>
<dbReference type="PDB" id="7ZPQ">
    <property type="method" value="EM"/>
    <property type="resolution" value="3.47 A"/>
    <property type="chains" value="AQ=3-143"/>
</dbReference>
<dbReference type="PDB" id="7ZRS">
    <property type="method" value="EM"/>
    <property type="resolution" value="4.80 A"/>
    <property type="chains" value="AQ=3-143"/>
</dbReference>
<dbReference type="PDB" id="7ZUW">
    <property type="method" value="EM"/>
    <property type="resolution" value="4.30 A"/>
    <property type="chains" value="AQ=3-143"/>
</dbReference>
<dbReference type="PDB" id="7ZUX">
    <property type="method" value="EM"/>
    <property type="resolution" value="2.50 A"/>
    <property type="chains" value="DQ=3-143"/>
</dbReference>
<dbReference type="PDB" id="7ZW0">
    <property type="method" value="EM"/>
    <property type="resolution" value="2.40 A"/>
    <property type="chains" value="sF=1-143"/>
</dbReference>
<dbReference type="PDB" id="8BN3">
    <property type="method" value="EM"/>
    <property type="resolution" value="2.40 A"/>
    <property type="chains" value="C6=3-143"/>
</dbReference>
<dbReference type="PDB" id="8BQD">
    <property type="method" value="EM"/>
    <property type="resolution" value="3.90 A"/>
    <property type="chains" value="F=3-143"/>
</dbReference>
<dbReference type="PDB" id="8BQX">
    <property type="method" value="EM"/>
    <property type="resolution" value="3.80 A"/>
    <property type="chains" value="F=3-143"/>
</dbReference>
<dbReference type="PDB" id="8C00">
    <property type="method" value="EM"/>
    <property type="resolution" value="2.90 A"/>
    <property type="chains" value="F=1-143"/>
</dbReference>
<dbReference type="PDB" id="8C01">
    <property type="method" value="EM"/>
    <property type="resolution" value="2.70 A"/>
    <property type="chains" value="F=1-143"/>
</dbReference>
<dbReference type="PDB" id="8CAH">
    <property type="method" value="EM"/>
    <property type="resolution" value="3.00 A"/>
    <property type="chains" value="F=1-143"/>
</dbReference>
<dbReference type="PDB" id="8CAS">
    <property type="method" value="EM"/>
    <property type="resolution" value="3.30 A"/>
    <property type="chains" value="H=1-143"/>
</dbReference>
<dbReference type="PDB" id="8CBJ">
    <property type="method" value="EM"/>
    <property type="resolution" value="3.80 A"/>
    <property type="chains" value="Q=1-143"/>
</dbReference>
<dbReference type="PDB" id="8CCS">
    <property type="method" value="EM"/>
    <property type="resolution" value="1.97 A"/>
    <property type="chains" value="s=1-143"/>
</dbReference>
<dbReference type="PDB" id="8CDL">
    <property type="method" value="EM"/>
    <property type="resolution" value="2.72 A"/>
    <property type="chains" value="s=1-143"/>
</dbReference>
<dbReference type="PDB" id="8CDR">
    <property type="method" value="EM"/>
    <property type="resolution" value="2.04 A"/>
    <property type="chains" value="s=1-143"/>
</dbReference>
<dbReference type="PDB" id="8CEH">
    <property type="method" value="EM"/>
    <property type="resolution" value="2.05 A"/>
    <property type="chains" value="s=1-143"/>
</dbReference>
<dbReference type="PDB" id="8CF5">
    <property type="method" value="EM"/>
    <property type="resolution" value="2.71 A"/>
    <property type="chains" value="s=1-143"/>
</dbReference>
<dbReference type="PDB" id="8CG8">
    <property type="method" value="EM"/>
    <property type="resolution" value="2.57 A"/>
    <property type="chains" value="s=1-143"/>
</dbReference>
<dbReference type="PDB" id="8CGN">
    <property type="method" value="EM"/>
    <property type="resolution" value="2.28 A"/>
    <property type="chains" value="s=1-143"/>
</dbReference>
<dbReference type="PDB" id="8CIV">
    <property type="method" value="EM"/>
    <property type="resolution" value="2.47 A"/>
    <property type="chains" value="s=1-143"/>
</dbReference>
<dbReference type="PDB" id="8CKU">
    <property type="method" value="EM"/>
    <property type="resolution" value="3.11 A"/>
    <property type="chains" value="s=1-143"/>
</dbReference>
<dbReference type="PDB" id="8CMJ">
    <property type="method" value="EM"/>
    <property type="resolution" value="3.79 A"/>
    <property type="chains" value="s=1-143"/>
</dbReference>
<dbReference type="PDB" id="8EUB">
    <property type="method" value="EM"/>
    <property type="resolution" value="2.52 A"/>
    <property type="chains" value="BQ=1-143"/>
</dbReference>
<dbReference type="PDB" id="8EVP">
    <property type="method" value="EM"/>
    <property type="resolution" value="2.38 A"/>
    <property type="chains" value="BQ=1-143"/>
</dbReference>
<dbReference type="PDB" id="8EVQ">
    <property type="method" value="EM"/>
    <property type="resolution" value="2.72 A"/>
    <property type="chains" value="BQ=1-143"/>
</dbReference>
<dbReference type="PDB" id="8EVR">
    <property type="method" value="EM"/>
    <property type="resolution" value="2.87 A"/>
    <property type="chains" value="BQ=1-143"/>
</dbReference>
<dbReference type="PDB" id="8EVS">
    <property type="method" value="EM"/>
    <property type="resolution" value="2.62 A"/>
    <property type="chains" value="BQ=1-143"/>
</dbReference>
<dbReference type="PDB" id="8EVT">
    <property type="method" value="EM"/>
    <property type="resolution" value="2.20 A"/>
    <property type="chains" value="BQ=1-143"/>
</dbReference>
<dbReference type="PDB" id="8EWB">
    <property type="method" value="EM"/>
    <property type="resolution" value="2.87 A"/>
    <property type="chains" value="BQ=1-143"/>
</dbReference>
<dbReference type="PDB" id="8EWC">
    <property type="method" value="EM"/>
    <property type="resolution" value="2.45 A"/>
    <property type="chains" value="BQ=1-143"/>
</dbReference>
<dbReference type="PDB" id="8K2D">
    <property type="method" value="EM"/>
    <property type="resolution" value="3.20 A"/>
    <property type="chains" value="SQ=1-143"/>
</dbReference>
<dbReference type="PDB" id="8K82">
    <property type="method" value="EM"/>
    <property type="resolution" value="3.00 A"/>
    <property type="chains" value="SQ=1-143"/>
</dbReference>
<dbReference type="PDB" id="8P4V">
    <property type="method" value="X-ray"/>
    <property type="resolution" value="3.16 A"/>
    <property type="chains" value="R/c6=1-143"/>
</dbReference>
<dbReference type="PDB" id="8P9A">
    <property type="method" value="X-ray"/>
    <property type="resolution" value="2.90 A"/>
    <property type="chains" value="R/c6=1-143"/>
</dbReference>
<dbReference type="PDB" id="8T2X">
    <property type="method" value="EM"/>
    <property type="resolution" value="2.46 A"/>
    <property type="chains" value="BQ=1-143"/>
</dbReference>
<dbReference type="PDB" id="8T2Y">
    <property type="method" value="EM"/>
    <property type="resolution" value="2.20 A"/>
    <property type="chains" value="BQ=1-143"/>
</dbReference>
<dbReference type="PDB" id="8T2Z">
    <property type="method" value="EM"/>
    <property type="resolution" value="2.40 A"/>
    <property type="chains" value="BQ=1-143"/>
</dbReference>
<dbReference type="PDB" id="8T30">
    <property type="method" value="EM"/>
    <property type="resolution" value="2.88 A"/>
    <property type="chains" value="BQ=1-143"/>
</dbReference>
<dbReference type="PDB" id="8T3A">
    <property type="method" value="EM"/>
    <property type="resolution" value="2.86 A"/>
    <property type="chains" value="BQ=1-143"/>
</dbReference>
<dbReference type="PDB" id="8T3B">
    <property type="method" value="EM"/>
    <property type="resolution" value="3.08 A"/>
    <property type="chains" value="BQ=1-143"/>
</dbReference>
<dbReference type="PDB" id="8T3C">
    <property type="method" value="EM"/>
    <property type="resolution" value="3.86 A"/>
    <property type="chains" value="BQ=1-143"/>
</dbReference>
<dbReference type="PDB" id="8T3D">
    <property type="method" value="EM"/>
    <property type="resolution" value="2.95 A"/>
    <property type="chains" value="BQ=1-143"/>
</dbReference>
<dbReference type="PDB" id="8T3E">
    <property type="method" value="EM"/>
    <property type="resolution" value="3.04 A"/>
    <property type="chains" value="BQ=1-143"/>
</dbReference>
<dbReference type="PDB" id="8T3F">
    <property type="method" value="EM"/>
    <property type="resolution" value="3.09 A"/>
    <property type="chains" value="BQ=1-143"/>
</dbReference>
<dbReference type="PDB" id="8UT0">
    <property type="method" value="EM"/>
    <property type="resolution" value="3.22 A"/>
    <property type="chains" value="SF=3-143"/>
</dbReference>
<dbReference type="PDB" id="8UTI">
    <property type="method" value="EM"/>
    <property type="resolution" value="3.13 A"/>
    <property type="chains" value="SF=3-143"/>
</dbReference>
<dbReference type="PDB" id="8XU8">
    <property type="method" value="EM"/>
    <property type="resolution" value="3.40 A"/>
    <property type="chains" value="SF=3-143"/>
</dbReference>
<dbReference type="PDB" id="8Y0U">
    <property type="method" value="EM"/>
    <property type="resolution" value="3.59 A"/>
    <property type="chains" value="SQ=1-143"/>
</dbReference>
<dbReference type="PDB" id="8YLD">
    <property type="method" value="EM"/>
    <property type="resolution" value="3.90 A"/>
    <property type="chains" value="SF=3-143"/>
</dbReference>
<dbReference type="PDB" id="8YLR">
    <property type="method" value="EM"/>
    <property type="resolution" value="3.90 A"/>
    <property type="chains" value="SF=3-143"/>
</dbReference>
<dbReference type="PDB" id="8Z70">
    <property type="method" value="EM"/>
    <property type="resolution" value="3.20 A"/>
    <property type="chains" value="SF=3-143"/>
</dbReference>
<dbReference type="PDB" id="8Z71">
    <property type="method" value="EM"/>
    <property type="resolution" value="3.60 A"/>
    <property type="chains" value="SF=3-143"/>
</dbReference>
<dbReference type="PDB" id="9F9S">
    <property type="method" value="EM"/>
    <property type="resolution" value="2.90 A"/>
    <property type="chains" value="Rq/Sq=1-143"/>
</dbReference>
<dbReference type="PDBsum" id="3J6X"/>
<dbReference type="PDBsum" id="3J6Y"/>
<dbReference type="PDBsum" id="3J77"/>
<dbReference type="PDBsum" id="3J78"/>
<dbReference type="PDBsum" id="4U3M"/>
<dbReference type="PDBsum" id="4U3N"/>
<dbReference type="PDBsum" id="4U3U"/>
<dbReference type="PDBsum" id="4U4N"/>
<dbReference type="PDBsum" id="4U4O"/>
<dbReference type="PDBsum" id="4U4Q"/>
<dbReference type="PDBsum" id="4U4R"/>
<dbReference type="PDBsum" id="4U4U"/>
<dbReference type="PDBsum" id="4U4Y"/>
<dbReference type="PDBsum" id="4U4Z"/>
<dbReference type="PDBsum" id="4U50"/>
<dbReference type="PDBsum" id="4U51"/>
<dbReference type="PDBsum" id="4U52"/>
<dbReference type="PDBsum" id="4U53"/>
<dbReference type="PDBsum" id="4U55"/>
<dbReference type="PDBsum" id="4U56"/>
<dbReference type="PDBsum" id="4U6F"/>
<dbReference type="PDBsum" id="4V4B"/>
<dbReference type="PDBsum" id="4V5Z"/>
<dbReference type="PDBsum" id="4V6I"/>
<dbReference type="PDBsum" id="4V7R"/>
<dbReference type="PDBsum" id="4V88"/>
<dbReference type="PDBsum" id="4V8Y"/>
<dbReference type="PDBsum" id="4V8Z"/>
<dbReference type="PDBsum" id="4V92"/>
<dbReference type="PDBsum" id="5DAT"/>
<dbReference type="PDBsum" id="5DC3"/>
<dbReference type="PDBsum" id="5DGE"/>
<dbReference type="PDBsum" id="5DGF"/>
<dbReference type="PDBsum" id="5DGV"/>
<dbReference type="PDBsum" id="5FCI"/>
<dbReference type="PDBsum" id="5FCJ"/>
<dbReference type="PDBsum" id="5I4L"/>
<dbReference type="PDBsum" id="5JPQ"/>
<dbReference type="PDBsum" id="5JUO"/>
<dbReference type="PDBsum" id="5JUP"/>
<dbReference type="PDBsum" id="5JUS"/>
<dbReference type="PDBsum" id="5JUT"/>
<dbReference type="PDBsum" id="5JUU"/>
<dbReference type="PDBsum" id="5LYB"/>
<dbReference type="PDBsum" id="5M1J"/>
<dbReference type="PDBsum" id="5MC6"/>
<dbReference type="PDBsum" id="5MEI"/>
<dbReference type="PDBsum" id="5NDG"/>
<dbReference type="PDBsum" id="5NDV"/>
<dbReference type="PDBsum" id="5NDW"/>
<dbReference type="PDBsum" id="5OBM"/>
<dbReference type="PDBsum" id="5ON6"/>
<dbReference type="PDBsum" id="5TBW"/>
<dbReference type="PDBsum" id="5TGA"/>
<dbReference type="PDBsum" id="5TGM"/>
<dbReference type="PDBsum" id="5TZS"/>
<dbReference type="PDBsum" id="5WLC"/>
<dbReference type="PDBsum" id="5WYJ"/>
<dbReference type="PDBsum" id="5WYK"/>
<dbReference type="PDBsum" id="6EML"/>
<dbReference type="PDBsum" id="6FAI"/>
<dbReference type="PDBsum" id="6GQ1"/>
<dbReference type="PDBsum" id="6GQB"/>
<dbReference type="PDBsum" id="6GQV"/>
<dbReference type="PDBsum" id="6HHQ"/>
<dbReference type="PDBsum" id="6I7O"/>
<dbReference type="PDBsum" id="6KE6"/>
<dbReference type="PDBsum" id="6LQP"/>
<dbReference type="PDBsum" id="6LQQ"/>
<dbReference type="PDBsum" id="6LQR"/>
<dbReference type="PDBsum" id="6LQS"/>
<dbReference type="PDBsum" id="6LQT"/>
<dbReference type="PDBsum" id="6LQU"/>
<dbReference type="PDBsum" id="6LQV"/>
<dbReference type="PDBsum" id="6Q8Y"/>
<dbReference type="PDBsum" id="6RBD"/>
<dbReference type="PDBsum" id="6RBE"/>
<dbReference type="PDBsum" id="6S47"/>
<dbReference type="PDBsum" id="6SNT"/>
<dbReference type="PDBsum" id="6SV4"/>
<dbReference type="PDBsum" id="6T4Q"/>
<dbReference type="PDBsum" id="6T7I"/>
<dbReference type="PDBsum" id="6T7T"/>
<dbReference type="PDBsum" id="6T83"/>
<dbReference type="PDBsum" id="6TB3"/>
<dbReference type="PDBsum" id="6TNU"/>
<dbReference type="PDBsum" id="6WDR"/>
<dbReference type="PDBsum" id="6WOO"/>
<dbReference type="PDBsum" id="6XIQ"/>
<dbReference type="PDBsum" id="6XIR"/>
<dbReference type="PDBsum" id="6Y7C"/>
<dbReference type="PDBsum" id="6Z6J"/>
<dbReference type="PDBsum" id="6Z6K"/>
<dbReference type="PDBsum" id="6ZCE"/>
<dbReference type="PDBsum" id="6ZQA"/>
<dbReference type="PDBsum" id="6ZQB"/>
<dbReference type="PDBsum" id="6ZQC"/>
<dbReference type="PDBsum" id="6ZQD"/>
<dbReference type="PDBsum" id="6ZQE"/>
<dbReference type="PDBsum" id="6ZQF"/>
<dbReference type="PDBsum" id="6ZQG"/>
<dbReference type="PDBsum" id="6ZU9"/>
<dbReference type="PDBsum" id="6ZVI"/>
<dbReference type="PDBsum" id="7A1G"/>
<dbReference type="PDBsum" id="7AJT"/>
<dbReference type="PDBsum" id="7AJU"/>
<dbReference type="PDBsum" id="7B7D"/>
<dbReference type="PDBsum" id="7D4I"/>
<dbReference type="PDBsum" id="7D5S"/>
<dbReference type="PDBsum" id="7D5T"/>
<dbReference type="PDBsum" id="7D63"/>
<dbReference type="PDBsum" id="7MPI"/>
<dbReference type="PDBsum" id="7MPJ"/>
<dbReference type="PDBsum" id="7N8B"/>
<dbReference type="PDBsum" id="7NRC"/>
<dbReference type="PDBsum" id="7NRD"/>
<dbReference type="PDBsum" id="7SUK"/>
<dbReference type="PDBsum" id="7ZPQ"/>
<dbReference type="PDBsum" id="7ZRS"/>
<dbReference type="PDBsum" id="7ZUW"/>
<dbReference type="PDBsum" id="7ZUX"/>
<dbReference type="PDBsum" id="7ZW0"/>
<dbReference type="PDBsum" id="8BN3"/>
<dbReference type="PDBsum" id="8BQD"/>
<dbReference type="PDBsum" id="8BQX"/>
<dbReference type="PDBsum" id="8C00"/>
<dbReference type="PDBsum" id="8C01"/>
<dbReference type="PDBsum" id="8CAH"/>
<dbReference type="PDBsum" id="8CAS"/>
<dbReference type="PDBsum" id="8CBJ"/>
<dbReference type="PDBsum" id="8CCS"/>
<dbReference type="PDBsum" id="8CDL"/>
<dbReference type="PDBsum" id="8CDR"/>
<dbReference type="PDBsum" id="8CEH"/>
<dbReference type="PDBsum" id="8CF5"/>
<dbReference type="PDBsum" id="8CG8"/>
<dbReference type="PDBsum" id="8CGN"/>
<dbReference type="PDBsum" id="8CIV"/>
<dbReference type="PDBsum" id="8CKU"/>
<dbReference type="PDBsum" id="8CMJ"/>
<dbReference type="PDBsum" id="8EUB"/>
<dbReference type="PDBsum" id="8EVP"/>
<dbReference type="PDBsum" id="8EVQ"/>
<dbReference type="PDBsum" id="8EVR"/>
<dbReference type="PDBsum" id="8EVS"/>
<dbReference type="PDBsum" id="8EVT"/>
<dbReference type="PDBsum" id="8EWB"/>
<dbReference type="PDBsum" id="8EWC"/>
<dbReference type="PDBsum" id="8K2D"/>
<dbReference type="PDBsum" id="8K82"/>
<dbReference type="PDBsum" id="8P4V"/>
<dbReference type="PDBsum" id="8P9A"/>
<dbReference type="PDBsum" id="8T2X"/>
<dbReference type="PDBsum" id="8T2Y"/>
<dbReference type="PDBsum" id="8T2Z"/>
<dbReference type="PDBsum" id="8T30"/>
<dbReference type="PDBsum" id="8T3A"/>
<dbReference type="PDBsum" id="8T3B"/>
<dbReference type="PDBsum" id="8T3C"/>
<dbReference type="PDBsum" id="8T3D"/>
<dbReference type="PDBsum" id="8T3E"/>
<dbReference type="PDBsum" id="8T3F"/>
<dbReference type="PDBsum" id="8UT0"/>
<dbReference type="PDBsum" id="8UTI"/>
<dbReference type="PDBsum" id="8XU8"/>
<dbReference type="PDBsum" id="8Y0U"/>
<dbReference type="PDBsum" id="8YLD"/>
<dbReference type="PDBsum" id="8YLR"/>
<dbReference type="PDBsum" id="8Z70"/>
<dbReference type="PDBsum" id="8Z71"/>
<dbReference type="PDBsum" id="9F9S"/>
<dbReference type="EMDB" id="EMD-0047"/>
<dbReference type="EMDB" id="EMD-0048"/>
<dbReference type="EMDB" id="EMD-0049"/>
<dbReference type="EMDB" id="EMD-0949"/>
<dbReference type="EMDB" id="EMD-0950"/>
<dbReference type="EMDB" id="EMD-0951"/>
<dbReference type="EMDB" id="EMD-0952"/>
<dbReference type="EMDB" id="EMD-0953"/>
<dbReference type="EMDB" id="EMD-0954"/>
<dbReference type="EMDB" id="EMD-0955"/>
<dbReference type="EMDB" id="EMD-10098"/>
<dbReference type="EMDB" id="EMD-10262"/>
<dbReference type="EMDB" id="EMD-10315"/>
<dbReference type="EMDB" id="EMD-10377"/>
<dbReference type="EMDB" id="EMD-10396"/>
<dbReference type="EMDB" id="EMD-10397"/>
<dbReference type="EMDB" id="EMD-10398"/>
<dbReference type="EMDB" id="EMD-10431"/>
<dbReference type="EMDB" id="EMD-10537"/>
<dbReference type="EMDB" id="EMD-10713"/>
<dbReference type="EMDB" id="EMD-11096"/>
<dbReference type="EMDB" id="EMD-11097"/>
<dbReference type="EMDB" id="EMD-11160"/>
<dbReference type="EMDB" id="EMD-11357"/>
<dbReference type="EMDB" id="EMD-11358"/>
<dbReference type="EMDB" id="EMD-11359"/>
<dbReference type="EMDB" id="EMD-11360"/>
<dbReference type="EMDB" id="EMD-11361"/>
<dbReference type="EMDB" id="EMD-11362"/>
<dbReference type="EMDB" id="EMD-11363"/>
<dbReference type="EMDB" id="EMD-11439"/>
<dbReference type="EMDB" id="EMD-11457"/>
<dbReference type="EMDB" id="EMD-11608"/>
<dbReference type="EMDB" id="EMD-11807"/>
<dbReference type="EMDB" id="EMD-11808"/>
<dbReference type="EMDB" id="EMD-12081"/>
<dbReference type="EMDB" id="EMD-12534"/>
<dbReference type="EMDB" id="EMD-12535"/>
<dbReference type="EMDB" id="EMD-14861"/>
<dbReference type="EMDB" id="EMD-14921"/>
<dbReference type="EMDB" id="EMD-14978"/>
<dbReference type="EMDB" id="EMD-14979"/>
<dbReference type="EMDB" id="EMD-14990"/>
<dbReference type="EMDB" id="EMD-16127"/>
<dbReference type="EMDB" id="EMD-16182"/>
<dbReference type="EMDB" id="EMD-16191"/>
<dbReference type="EMDB" id="EMD-16347"/>
<dbReference type="EMDB" id="EMD-16349"/>
<dbReference type="EMDB" id="EMD-16525"/>
<dbReference type="EMDB" id="EMD-16533"/>
<dbReference type="EMDB" id="EMD-16541"/>
<dbReference type="EMDB" id="EMD-16563"/>
<dbReference type="EMDB" id="EMD-16591"/>
<dbReference type="EMDB" id="EMD-16594"/>
<dbReference type="EMDB" id="EMD-16609"/>
<dbReference type="EMDB" id="EMD-16616"/>
<dbReference type="EMDB" id="EMD-16634"/>
<dbReference type="EMDB" id="EMD-16648"/>
<dbReference type="EMDB" id="EMD-16684"/>
<dbReference type="EMDB" id="EMD-16702"/>
<dbReference type="EMDB" id="EMD-16729"/>
<dbReference type="EMDB" id="EMD-21644"/>
<dbReference type="EMDB" id="EMD-21859"/>
<dbReference type="EMDB" id="EMD-22196"/>
<dbReference type="EMDB" id="EMD-22198"/>
<dbReference type="EMDB" id="EMD-23934"/>
<dbReference type="EMDB" id="EMD-23935"/>
<dbReference type="EMDB" id="EMD-24235"/>
<dbReference type="EMDB" id="EMD-25441"/>
<dbReference type="EMDB" id="EMD-28610"/>
<dbReference type="EMDB" id="EMD-28632"/>
<dbReference type="EMDB" id="EMD-28633"/>
<dbReference type="EMDB" id="EMD-28634"/>
<dbReference type="EMDB" id="EMD-28635"/>
<dbReference type="EMDB" id="EMD-28636"/>
<dbReference type="EMDB" id="EMD-28642"/>
<dbReference type="EMDB" id="EMD-28643"/>
<dbReference type="EMDB" id="EMD-30574"/>
<dbReference type="EMDB" id="EMD-30584"/>
<dbReference type="EMDB" id="EMD-30585"/>
<dbReference type="EMDB" id="EMD-30588"/>
<dbReference type="EMDB" id="EMD-3461"/>
<dbReference type="EMDB" id="EMD-36839"/>
<dbReference type="EMDB" id="EMD-36945"/>
<dbReference type="EMDB" id="EMD-38660"/>
<dbReference type="EMDB" id="EMD-40990"/>
<dbReference type="EMDB" id="EMD-40991"/>
<dbReference type="EMDB" id="EMD-40992"/>
<dbReference type="EMDB" id="EMD-40993"/>
<dbReference type="EMDB" id="EMD-40997"/>
<dbReference type="EMDB" id="EMD-40998"/>
<dbReference type="EMDB" id="EMD-40999"/>
<dbReference type="EMDB" id="EMD-41000"/>
<dbReference type="EMDB" id="EMD-41001"/>
<dbReference type="EMDB" id="EMD-41002"/>
<dbReference type="EMDB" id="EMD-4140"/>
<dbReference type="EMDB" id="EMD-4214"/>
<dbReference type="EMDB" id="EMD-42525"/>
<dbReference type="EMDB" id="EMD-42540"/>
<dbReference type="EMDB" id="EMD-4427"/>
<dbReference type="EMDB" id="EMD-4474"/>
<dbReference type="EMDB" id="EMD-4792"/>
<dbReference type="EMDB" id="EMD-4793"/>
<dbReference type="EMDB" id="EMD-50259"/>
<dbReference type="EMDB" id="EMD-6695"/>
<dbReference type="EMDB" id="EMD-6696"/>
<dbReference type="EMDB" id="EMD-8473"/>
<dbReference type="EMDB" id="EMD-8859"/>
<dbReference type="EMDB" id="EMD-9964"/>
<dbReference type="SMR" id="P0CX51"/>
<dbReference type="BioGRID" id="31978">
    <property type="interactions" value="300"/>
</dbReference>
<dbReference type="BioGRID" id="35319">
    <property type="interactions" value="369"/>
</dbReference>
<dbReference type="ComplexPortal" id="CPX-1599">
    <property type="entry name" value="40S cytosolic small ribosomal subunit"/>
</dbReference>
<dbReference type="FunCoup" id="P0CX51">
    <property type="interactions" value="925"/>
</dbReference>
<dbReference type="IntAct" id="P0CX51">
    <property type="interactions" value="44"/>
</dbReference>
<dbReference type="MINT" id="P0CX51"/>
<dbReference type="STRING" id="4932.YDL083C"/>
<dbReference type="CarbonylDB" id="P0CX51"/>
<dbReference type="iPTMnet" id="P0CX51"/>
<dbReference type="PaxDb" id="4932-YDL083C"/>
<dbReference type="PeptideAtlas" id="P0CX51"/>
<dbReference type="TopDownProteomics" id="P0CX51"/>
<dbReference type="EnsemblFungi" id="YDL083C_mRNA">
    <property type="protein sequence ID" value="YDL083C"/>
    <property type="gene ID" value="YDL083C"/>
</dbReference>
<dbReference type="EnsemblFungi" id="YMR143W_mRNA">
    <property type="protein sequence ID" value="YMR143W"/>
    <property type="gene ID" value="YMR143W"/>
</dbReference>
<dbReference type="GeneID" id="855174"/>
<dbReference type="KEGG" id="sce:YDL083C"/>
<dbReference type="KEGG" id="sce:YMR143W"/>
<dbReference type="AGR" id="SGD:S000004751"/>
<dbReference type="SGD" id="S000004751">
    <property type="gene designation" value="RPS16A"/>
</dbReference>
<dbReference type="VEuPathDB" id="FungiDB:YDL083C"/>
<dbReference type="VEuPathDB" id="FungiDB:YMR143W"/>
<dbReference type="eggNOG" id="KOG1753">
    <property type="taxonomic scope" value="Eukaryota"/>
</dbReference>
<dbReference type="HOGENOM" id="CLU_046483_4_0_1"/>
<dbReference type="InParanoid" id="P0CX51"/>
<dbReference type="OMA" id="WPIEMAR"/>
<dbReference type="OrthoDB" id="426865at2759"/>
<dbReference type="BioCyc" id="YEAST:G3O-32835-MONOMER"/>
<dbReference type="Reactome" id="R-SCE-156827">
    <property type="pathway name" value="L13a-mediated translational silencing of Ceruloplasmin expression"/>
</dbReference>
<dbReference type="Reactome" id="R-SCE-1799339">
    <property type="pathway name" value="SRP-dependent cotranslational protein targeting to membrane"/>
</dbReference>
<dbReference type="Reactome" id="R-SCE-72649">
    <property type="pathway name" value="Translation initiation complex formation"/>
</dbReference>
<dbReference type="Reactome" id="R-SCE-72689">
    <property type="pathway name" value="Formation of a pool of free 40S subunits"/>
</dbReference>
<dbReference type="Reactome" id="R-SCE-72695">
    <property type="pathway name" value="Formation of the ternary complex, and subsequently, the 43S complex"/>
</dbReference>
<dbReference type="Reactome" id="R-SCE-72702">
    <property type="pathway name" value="Ribosomal scanning and start codon recognition"/>
</dbReference>
<dbReference type="Reactome" id="R-SCE-72706">
    <property type="pathway name" value="GTP hydrolysis and joining of the 60S ribosomal subunit"/>
</dbReference>
<dbReference type="Reactome" id="R-SCE-975956">
    <property type="pathway name" value="Nonsense Mediated Decay (NMD) independent of the Exon Junction Complex (EJC)"/>
</dbReference>
<dbReference type="Reactome" id="R-SCE-975957">
    <property type="pathway name" value="Nonsense Mediated Decay (NMD) enhanced by the Exon Junction Complex (EJC)"/>
</dbReference>
<dbReference type="BioGRID-ORCS" id="851476">
    <property type="hits" value="4 hits in 10 CRISPR screens"/>
</dbReference>
<dbReference type="BioGRID-ORCS" id="855174">
    <property type="hits" value="3 hits in 10 CRISPR screens"/>
</dbReference>
<dbReference type="PRO" id="PR:P0CX51"/>
<dbReference type="Proteomes" id="UP000002311">
    <property type="component" value="Chromosome XIII"/>
</dbReference>
<dbReference type="RNAct" id="P0CX51">
    <property type="molecule type" value="protein"/>
</dbReference>
<dbReference type="ExpressionAtlas" id="P0CX51">
    <property type="expression patterns" value="baseline and differential"/>
</dbReference>
<dbReference type="GO" id="GO:0030686">
    <property type="term" value="C:90S preribosome"/>
    <property type="evidence" value="ECO:0007005"/>
    <property type="project" value="SGD"/>
</dbReference>
<dbReference type="GO" id="GO:0005829">
    <property type="term" value="C:cytosol"/>
    <property type="evidence" value="ECO:0000304"/>
    <property type="project" value="Reactome"/>
</dbReference>
<dbReference type="GO" id="GO:0022627">
    <property type="term" value="C:cytosolic small ribosomal subunit"/>
    <property type="evidence" value="ECO:0000318"/>
    <property type="project" value="GO_Central"/>
</dbReference>
<dbReference type="GO" id="GO:0003723">
    <property type="term" value="F:RNA binding"/>
    <property type="evidence" value="ECO:0000318"/>
    <property type="project" value="GO_Central"/>
</dbReference>
<dbReference type="GO" id="GO:0003735">
    <property type="term" value="F:structural constituent of ribosome"/>
    <property type="evidence" value="ECO:0000318"/>
    <property type="project" value="GO_Central"/>
</dbReference>
<dbReference type="GO" id="GO:0000462">
    <property type="term" value="P:maturation of SSU-rRNA from tricistronic rRNA transcript (SSU-rRNA, 5.8S rRNA, LSU-rRNA)"/>
    <property type="evidence" value="ECO:0000316"/>
    <property type="project" value="SGD"/>
</dbReference>
<dbReference type="GO" id="GO:0006413">
    <property type="term" value="P:translational initiation"/>
    <property type="evidence" value="ECO:0000316"/>
    <property type="project" value="SGD"/>
</dbReference>
<dbReference type="FunFam" id="3.30.230.10:FF:000007">
    <property type="entry name" value="40S ribosomal protein S16"/>
    <property type="match status" value="1"/>
</dbReference>
<dbReference type="Gene3D" id="3.30.230.10">
    <property type="match status" value="1"/>
</dbReference>
<dbReference type="InterPro" id="IPR020568">
    <property type="entry name" value="Ribosomal_Su5_D2-typ_SF"/>
</dbReference>
<dbReference type="InterPro" id="IPR000754">
    <property type="entry name" value="Ribosomal_uS9"/>
</dbReference>
<dbReference type="InterPro" id="IPR020574">
    <property type="entry name" value="Ribosomal_uS9_CS"/>
</dbReference>
<dbReference type="InterPro" id="IPR014721">
    <property type="entry name" value="Ribsml_uS5_D2-typ_fold_subgr"/>
</dbReference>
<dbReference type="NCBIfam" id="NF001749">
    <property type="entry name" value="PRK00474.1"/>
    <property type="match status" value="1"/>
</dbReference>
<dbReference type="PANTHER" id="PTHR21569:SF16">
    <property type="entry name" value="RIBOSOMAL PROTEIN S16"/>
    <property type="match status" value="1"/>
</dbReference>
<dbReference type="PANTHER" id="PTHR21569">
    <property type="entry name" value="RIBOSOMAL PROTEIN S9"/>
    <property type="match status" value="1"/>
</dbReference>
<dbReference type="Pfam" id="PF00380">
    <property type="entry name" value="Ribosomal_S9"/>
    <property type="match status" value="1"/>
</dbReference>
<dbReference type="SUPFAM" id="SSF54211">
    <property type="entry name" value="Ribosomal protein S5 domain 2-like"/>
    <property type="match status" value="1"/>
</dbReference>
<dbReference type="PROSITE" id="PS00360">
    <property type="entry name" value="RIBOSOMAL_S9"/>
    <property type="match status" value="1"/>
</dbReference>
<protein>
    <recommendedName>
        <fullName evidence="7">Small ribosomal subunit protein uS9A</fullName>
    </recommendedName>
    <alternativeName>
        <fullName evidence="8">40S ribosomal protein S16-A</fullName>
    </alternativeName>
    <alternativeName>
        <fullName>RP61R</fullName>
    </alternativeName>
</protein>
<proteinExistence type="evidence at protein level"/>
<gene>
    <name evidence="8" type="primary">RPS16A</name>
    <name type="synonym">RP61R</name>
    <name type="ordered locus">YMR143W</name>
    <name type="ORF">YM9375.12</name>
</gene>
<comment type="function">
    <text evidence="10">Component of the ribosome, a large ribonucleoprotein complex responsible for the synthesis of proteins in the cell. The small ribosomal subunit (SSU) binds messenger RNAs (mRNAs) and translates the encoded message by selecting cognate aminoacyl-transfer RNA (tRNA) molecules. The large subunit (LSU) contains the ribosomal catalytic site termed the peptidyl transferase center (PTC), which catalyzes the formation of peptide bonds, thereby polymerizing the amino acids delivered by tRNAs into a polypeptide chain. The nascent polypeptides leave the ribosome through a tunnel in the LSU and interact with protein factors that function in enzymatic processing, targeting, and the membrane insertion of nascent chains at the exit of the ribosomal tunnel.</text>
</comment>
<comment type="subunit">
    <text evidence="6 11">Component of the small ribosomal subunit (SSU). Mature yeast ribosomes consist of a small (40S) and a large (60S) subunit. The 40S small subunit contains 1 molecule of ribosomal RNA (18S rRNA) and 33 different proteins (encoded by 57 genes). The large 60S subunit contains 3 rRNA molecules (25S, 5.8S and 5S rRNA) and 46 different proteins (encoded by 81 genes) (PubMed:22096102, PubMed:9559554).</text>
</comment>
<comment type="subcellular location">
    <subcellularLocation>
        <location evidence="3 6">Cytoplasm</location>
    </subcellularLocation>
</comment>
<comment type="miscellaneous">
    <text evidence="4">Present with 33800 molecules/cell in log phase SD medium.</text>
</comment>
<comment type="miscellaneous">
    <text evidence="9">There are 2 genes for uS9 in yeast.</text>
</comment>
<comment type="similarity">
    <text evidence="9">Belongs to the universal ribosomal protein uS9 family.</text>
</comment>
<reference key="1">
    <citation type="journal article" date="1997" name="Nature">
        <title>The nucleotide sequence of Saccharomyces cerevisiae chromosome XIII.</title>
        <authorList>
            <person name="Bowman S."/>
            <person name="Churcher C.M."/>
            <person name="Badcock K."/>
            <person name="Brown D."/>
            <person name="Chillingworth T."/>
            <person name="Connor R."/>
            <person name="Dedman K."/>
            <person name="Devlin K."/>
            <person name="Gentles S."/>
            <person name="Hamlin N."/>
            <person name="Hunt S."/>
            <person name="Jagels K."/>
            <person name="Lye G."/>
            <person name="Moule S."/>
            <person name="Odell C."/>
            <person name="Pearson D."/>
            <person name="Rajandream M.A."/>
            <person name="Rice P."/>
            <person name="Skelton J."/>
            <person name="Walsh S.V."/>
            <person name="Whitehead S."/>
            <person name="Barrell B.G."/>
        </authorList>
    </citation>
    <scope>NUCLEOTIDE SEQUENCE [LARGE SCALE GENOMIC DNA]</scope>
    <source>
        <strain>ATCC 204508 / S288c</strain>
    </source>
</reference>
<reference key="2">
    <citation type="journal article" date="2014" name="G3 (Bethesda)">
        <title>The reference genome sequence of Saccharomyces cerevisiae: Then and now.</title>
        <authorList>
            <person name="Engel S.R."/>
            <person name="Dietrich F.S."/>
            <person name="Fisk D.G."/>
            <person name="Binkley G."/>
            <person name="Balakrishnan R."/>
            <person name="Costanzo M.C."/>
            <person name="Dwight S.S."/>
            <person name="Hitz B.C."/>
            <person name="Karra K."/>
            <person name="Nash R.S."/>
            <person name="Weng S."/>
            <person name="Wong E.D."/>
            <person name="Lloyd P."/>
            <person name="Skrzypek M.S."/>
            <person name="Miyasato S.R."/>
            <person name="Simison M."/>
            <person name="Cherry J.M."/>
        </authorList>
    </citation>
    <scope>GENOME REANNOTATION</scope>
    <source>
        <strain>ATCC 204508 / S288c</strain>
    </source>
</reference>
<reference key="3">
    <citation type="journal article" date="1992" name="J. Biol. Chem.">
        <title>NH2-terminal acetylation of ribosomal proteins of Saccharomyces cerevisiae.</title>
        <authorList>
            <person name="Takakura H."/>
            <person name="Tsunasawa S."/>
            <person name="Miyagi M."/>
            <person name="Warner J.R."/>
        </authorList>
    </citation>
    <scope>PRELIMINARY PROTEIN SEQUENCE OF 2-26</scope>
    <scope>ACETYLATION AT SER-2 BY NATA</scope>
</reference>
<reference key="4">
    <citation type="journal article" date="1998" name="Yeast">
        <title>The list of cytoplasmic ribosomal proteins of Saccharomyces cerevisiae.</title>
        <authorList>
            <person name="Planta R.J."/>
            <person name="Mager W.H."/>
        </authorList>
    </citation>
    <scope>NOMENCLATURE</scope>
    <scope>SUBUNIT</scope>
</reference>
<reference key="5">
    <citation type="journal article" date="1999" name="J. Biol. Chem.">
        <title>The action of N-terminal acetyltransferases on yeast ribosomal proteins.</title>
        <authorList>
            <person name="Arnold R.J."/>
            <person name="Polevoda B."/>
            <person name="Reilly J.P."/>
            <person name="Sherman F."/>
        </authorList>
    </citation>
    <scope>CLEAVAGE OF INITIATOR METHIONINE</scope>
    <scope>ACETYLATION AT SER-2 BY NATA</scope>
</reference>
<reference key="6">
    <citation type="journal article" date="2003" name="Nature">
        <title>Global analysis of protein localization in budding yeast.</title>
        <authorList>
            <person name="Huh W.-K."/>
            <person name="Falvo J.V."/>
            <person name="Gerke L.C."/>
            <person name="Carroll A.S."/>
            <person name="Howson R.W."/>
            <person name="Weissman J.S."/>
            <person name="O'Shea E.K."/>
        </authorList>
    </citation>
    <scope>SUBCELLULAR LOCATION [LARGE SCALE ANALYSIS]</scope>
</reference>
<reference key="7">
    <citation type="journal article" date="2003" name="Nature">
        <title>Global analysis of protein expression in yeast.</title>
        <authorList>
            <person name="Ghaemmaghami S."/>
            <person name="Huh W.-K."/>
            <person name="Bower K."/>
            <person name="Howson R.W."/>
            <person name="Belle A."/>
            <person name="Dephoure N."/>
            <person name="O'Shea E.K."/>
            <person name="Weissman J.S."/>
        </authorList>
    </citation>
    <scope>LEVEL OF PROTEIN EXPRESSION [LARGE SCALE ANALYSIS]</scope>
</reference>
<reference key="8">
    <citation type="journal article" date="2007" name="Proc. Natl. Acad. Sci. U.S.A.">
        <title>Analysis of phosphorylation sites on proteins from Saccharomyces cerevisiae by electron transfer dissociation (ETD) mass spectrometry.</title>
        <authorList>
            <person name="Chi A."/>
            <person name="Huttenhower C."/>
            <person name="Geer L.Y."/>
            <person name="Coon J.J."/>
            <person name="Syka J.E.P."/>
            <person name="Bai D.L."/>
            <person name="Shabanowitz J."/>
            <person name="Burke D.J."/>
            <person name="Troyanskaya O.G."/>
            <person name="Hunt D.F."/>
        </authorList>
    </citation>
    <scope>PHOSPHORYLATION [LARGE SCALE ANALYSIS] AT SER-61; THR-70 AND SER-76</scope>
    <scope>IDENTIFICATION BY MASS SPECTROMETRY [LARGE SCALE ANALYSIS]</scope>
</reference>
<reference key="9">
    <citation type="journal article" date="2008" name="Mol. Cell. Proteomics">
        <title>A multidimensional chromatography technology for in-depth phosphoproteome analysis.</title>
        <authorList>
            <person name="Albuquerque C.P."/>
            <person name="Smolka M.B."/>
            <person name="Payne S.H."/>
            <person name="Bafna V."/>
            <person name="Eng J."/>
            <person name="Zhou H."/>
        </authorList>
    </citation>
    <scope>PHOSPHORYLATION [LARGE SCALE ANALYSIS] AT SER-34</scope>
    <scope>IDENTIFICATION BY MASS SPECTROMETRY [LARGE SCALE ANALYSIS]</scope>
</reference>
<reference key="10">
    <citation type="journal article" date="2009" name="Science">
        <title>Global analysis of Cdk1 substrate phosphorylation sites provides insights into evolution.</title>
        <authorList>
            <person name="Holt L.J."/>
            <person name="Tuch B.B."/>
            <person name="Villen J."/>
            <person name="Johnson A.D."/>
            <person name="Gygi S.P."/>
            <person name="Morgan D.O."/>
        </authorList>
    </citation>
    <scope>PHOSPHORYLATION [LARGE SCALE ANALYSIS] AT SER-34</scope>
    <scope>IDENTIFICATION BY MASS SPECTROMETRY [LARGE SCALE ANALYSIS]</scope>
</reference>
<reference key="11">
    <citation type="journal article" date="2012" name="Proteomics">
        <title>Sites of ubiquitin attachment in Saccharomyces cerevisiae.</title>
        <authorList>
            <person name="Starita L.M."/>
            <person name="Lo R.S."/>
            <person name="Eng J.K."/>
            <person name="von Haller P.D."/>
            <person name="Fields S."/>
        </authorList>
    </citation>
    <scope>UBIQUITINATION [LARGE SCALE ANALYSIS] AT LYS-30; LYS-47 AND LYS-59</scope>
    <scope>IDENTIFICATION BY MASS SPECTROMETRY [LARGE SCALE ANALYSIS]</scope>
</reference>
<reference key="12">
    <citation type="journal article" date="2014" name="Curr. Opin. Struct. Biol.">
        <title>A new system for naming ribosomal proteins.</title>
        <authorList>
            <person name="Ban N."/>
            <person name="Beckmann R."/>
            <person name="Cate J.H.D."/>
            <person name="Dinman J.D."/>
            <person name="Dragon F."/>
            <person name="Ellis S.R."/>
            <person name="Lafontaine D.L.J."/>
            <person name="Lindahl L."/>
            <person name="Liljas A."/>
            <person name="Lipton J.M."/>
            <person name="McAlear M.A."/>
            <person name="Moore P.B."/>
            <person name="Noller H.F."/>
            <person name="Ortega J."/>
            <person name="Panse V.G."/>
            <person name="Ramakrishnan V."/>
            <person name="Spahn C.M.T."/>
            <person name="Steitz T.A."/>
            <person name="Tchorzewski M."/>
            <person name="Tollervey D."/>
            <person name="Warren A.J."/>
            <person name="Williamson J.R."/>
            <person name="Wilson D."/>
            <person name="Yonath A."/>
            <person name="Yusupov M."/>
        </authorList>
    </citation>
    <scope>NOMENCLATURE</scope>
</reference>
<reference key="13">
    <citation type="journal article" date="2001" name="Cell">
        <title>Structure of the 80S ribosome from Saccharomyces cerevisiae -- tRNA-ribosome and subunit-subunit interactions.</title>
        <authorList>
            <person name="Spahn C.M.T."/>
            <person name="Beckmann R."/>
            <person name="Eswar N."/>
            <person name="Penczek P.A."/>
            <person name="Sali A."/>
            <person name="Blobel G."/>
            <person name="Frank J."/>
        </authorList>
    </citation>
    <scope>3D-STRUCTURE MODELING OF 5-143</scope>
    <scope>ELECTRON MICROSCOPY</scope>
</reference>
<reference key="14">
    <citation type="journal article" date="2004" name="EMBO J.">
        <title>Domain movements of elongation factor eEF2 and the eukaryotic 80S ribosome facilitate tRNA translocation.</title>
        <authorList>
            <person name="Spahn C.M.T."/>
            <person name="Gomez-Lorenzo M.G."/>
            <person name="Grassucci R.A."/>
            <person name="Joergensen R."/>
            <person name="Andersen G.R."/>
            <person name="Beckmann R."/>
            <person name="Penczek P.A."/>
            <person name="Ballesta J.P.G."/>
            <person name="Frank J."/>
        </authorList>
    </citation>
    <scope>3D-STRUCTURE MODELING</scope>
    <scope>ELECTRON MICROSCOPY</scope>
</reference>
<reference key="15">
    <citation type="journal article" date="2010" name="Science">
        <title>Crystal structure of the eukaryotic ribosome.</title>
        <authorList>
            <person name="Ben-Shem A."/>
            <person name="Jenner L."/>
            <person name="Yusupova G."/>
            <person name="Yusupov M."/>
        </authorList>
    </citation>
    <scope>X-RAY CRYSTALLOGRAPHY (4.00 ANGSTROMS) OF 80S RIBOSOME</scope>
</reference>
<reference key="16">
    <citation type="journal article" date="2011" name="Science">
        <title>The structure of the eukaryotic ribosome at 3.0 A resolution.</title>
        <authorList>
            <person name="Ben-Shem A."/>
            <person name="Garreau de Loubresse N."/>
            <person name="Melnikov S."/>
            <person name="Jenner L."/>
            <person name="Yusupova G."/>
            <person name="Yusupov M."/>
        </authorList>
    </citation>
    <scope>X-RAY CRYSTALLOGRAPHY (3.00 ANGSTROMS) OF 80S RIBOSOME</scope>
    <scope>SUBUNIT</scope>
    <scope>SUBCELLULAR LOCATION</scope>
</reference>
<evidence type="ECO:0000256" key="1">
    <source>
        <dbReference type="SAM" id="MobiDB-lite"/>
    </source>
</evidence>
<evidence type="ECO:0000269" key="2">
    <source>
    </source>
</evidence>
<evidence type="ECO:0000269" key="3">
    <source>
    </source>
</evidence>
<evidence type="ECO:0000269" key="4">
    <source>
    </source>
</evidence>
<evidence type="ECO:0000269" key="5">
    <source>
    </source>
</evidence>
<evidence type="ECO:0000269" key="6">
    <source>
    </source>
</evidence>
<evidence type="ECO:0000303" key="7">
    <source>
    </source>
</evidence>
<evidence type="ECO:0000303" key="8">
    <source>
    </source>
</evidence>
<evidence type="ECO:0000305" key="9"/>
<evidence type="ECO:0000305" key="10">
    <source>
    </source>
</evidence>
<evidence type="ECO:0000305" key="11">
    <source>
    </source>
</evidence>
<evidence type="ECO:0007744" key="12">
    <source>
    </source>
</evidence>
<evidence type="ECO:0007744" key="13">
    <source>
    </source>
</evidence>
<evidence type="ECO:0007744" key="14">
    <source>
    </source>
</evidence>
<evidence type="ECO:0007744" key="15">
    <source>
    </source>
</evidence>
<evidence type="ECO:0007829" key="16">
    <source>
        <dbReference type="PDB" id="6ZVI"/>
    </source>
</evidence>
<evidence type="ECO:0007829" key="17">
    <source>
        <dbReference type="PDB" id="8C01"/>
    </source>
</evidence>
<organism>
    <name type="scientific">Saccharomyces cerevisiae (strain ATCC 204508 / S288c)</name>
    <name type="common">Baker's yeast</name>
    <dbReference type="NCBI Taxonomy" id="559292"/>
    <lineage>
        <taxon>Eukaryota</taxon>
        <taxon>Fungi</taxon>
        <taxon>Dikarya</taxon>
        <taxon>Ascomycota</taxon>
        <taxon>Saccharomycotina</taxon>
        <taxon>Saccharomycetes</taxon>
        <taxon>Saccharomycetales</taxon>
        <taxon>Saccharomycetaceae</taxon>
        <taxon>Saccharomyces</taxon>
    </lineage>
</organism>